<protein>
    <recommendedName>
        <fullName evidence="1">MEMO1 family protein TRQ2_0860</fullName>
    </recommendedName>
</protein>
<proteinExistence type="inferred from homology"/>
<name>Y860_THESQ</name>
<reference key="1">
    <citation type="journal article" date="2011" name="J. Bacteriol.">
        <title>Genome sequence of Thermotoga sp. strain RQ2, a hyperthermophilic bacterium isolated from a geothermally heated region of the seafloor near Ribeira Quente, the Azores.</title>
        <authorList>
            <person name="Swithers K.S."/>
            <person name="DiPippo J.L."/>
            <person name="Bruce D.C."/>
            <person name="Detter C."/>
            <person name="Tapia R."/>
            <person name="Han S."/>
            <person name="Saunders E."/>
            <person name="Goodwin L.A."/>
            <person name="Han J."/>
            <person name="Woyke T."/>
            <person name="Pitluck S."/>
            <person name="Pennacchio L."/>
            <person name="Nolan M."/>
            <person name="Mikhailova N."/>
            <person name="Lykidis A."/>
            <person name="Land M.L."/>
            <person name="Brettin T."/>
            <person name="Stetter K.O."/>
            <person name="Nelson K.E."/>
            <person name="Gogarten J.P."/>
            <person name="Noll K.M."/>
        </authorList>
    </citation>
    <scope>NUCLEOTIDE SEQUENCE [LARGE SCALE GENOMIC DNA]</scope>
    <source>
        <strain>RQ2</strain>
    </source>
</reference>
<sequence>MKRKPAVAGLFYPSRRDELIEQIRMCFLDKRIGPGELPVPVETKLQNPIGLVSPHAGYIYSGPVAAWGFLEAVKFGEPSVVVIIGPNHTGLGRPVGVWPEGEWETPLGTVPVNQRAVEVILSNSRYAEEDFMSHIREHSIEVQIPFLQFVFGEVSMVPICLMDQSPAVAEDLASALMKLAAEFPGVLIIASTDLNHYEDQRTTLRKDSYIIEAIKSNDPRLLYEYLVKEDISMCGYGGVATLLNMNFKNARILKHATSGDVSGDKLEVVGYLSAILF</sequence>
<evidence type="ECO:0000255" key="1">
    <source>
        <dbReference type="HAMAP-Rule" id="MF_00055"/>
    </source>
</evidence>
<feature type="chain" id="PRO_1000091790" description="MEMO1 family protein TRQ2_0860">
    <location>
        <begin position="1"/>
        <end position="277"/>
    </location>
</feature>
<gene>
    <name type="ordered locus">TRQ2_0860</name>
</gene>
<organism>
    <name type="scientific">Thermotoga sp. (strain RQ2)</name>
    <dbReference type="NCBI Taxonomy" id="126740"/>
    <lineage>
        <taxon>Bacteria</taxon>
        <taxon>Thermotogati</taxon>
        <taxon>Thermotogota</taxon>
        <taxon>Thermotogae</taxon>
        <taxon>Thermotogales</taxon>
        <taxon>Thermotogaceae</taxon>
        <taxon>Thermotoga</taxon>
    </lineage>
</organism>
<dbReference type="EMBL" id="CP000969">
    <property type="protein sequence ID" value="ACB09212.1"/>
    <property type="molecule type" value="Genomic_DNA"/>
</dbReference>
<dbReference type="SMR" id="B1LA64"/>
<dbReference type="KEGG" id="trq:TRQ2_0860"/>
<dbReference type="HOGENOM" id="CLU_038085_2_0_0"/>
<dbReference type="Proteomes" id="UP000001687">
    <property type="component" value="Chromosome"/>
</dbReference>
<dbReference type="CDD" id="cd07361">
    <property type="entry name" value="MEMO_like"/>
    <property type="match status" value="1"/>
</dbReference>
<dbReference type="Gene3D" id="3.40.830.10">
    <property type="entry name" value="LigB-like"/>
    <property type="match status" value="1"/>
</dbReference>
<dbReference type="HAMAP" id="MF_00055">
    <property type="entry name" value="MEMO1"/>
    <property type="match status" value="1"/>
</dbReference>
<dbReference type="InterPro" id="IPR002737">
    <property type="entry name" value="MEMO1_fam"/>
</dbReference>
<dbReference type="NCBIfam" id="TIGR04336">
    <property type="entry name" value="AmmeMemoSam_B"/>
    <property type="match status" value="1"/>
</dbReference>
<dbReference type="PANTHER" id="PTHR11060">
    <property type="entry name" value="PROTEIN MEMO1"/>
    <property type="match status" value="1"/>
</dbReference>
<dbReference type="PANTHER" id="PTHR11060:SF0">
    <property type="entry name" value="PROTEIN MEMO1"/>
    <property type="match status" value="1"/>
</dbReference>
<dbReference type="Pfam" id="PF01875">
    <property type="entry name" value="Memo"/>
    <property type="match status" value="1"/>
</dbReference>
<comment type="similarity">
    <text evidence="1">Belongs to the MEMO1 family.</text>
</comment>
<accession>B1LA64</accession>